<feature type="chain" id="PRO_1000195523" description="Large ribosomal subunit protein uL10">
    <location>
        <begin position="1"/>
        <end position="197"/>
    </location>
</feature>
<feature type="region of interest" description="Disordered" evidence="2">
    <location>
        <begin position="163"/>
        <end position="197"/>
    </location>
</feature>
<comment type="function">
    <text evidence="1">Forms part of the ribosomal stalk, playing a central role in the interaction of the ribosome with GTP-bound translation factors.</text>
</comment>
<comment type="subunit">
    <text evidence="1">Part of the ribosomal stalk of the 50S ribosomal subunit. The N-terminus interacts with L11 and the large rRNA to form the base of the stalk. The C-terminus forms an elongated spine to which L12 dimers bind in a sequential fashion forming a multimeric L10(L12)X complex.</text>
</comment>
<comment type="similarity">
    <text evidence="1">Belongs to the universal ribosomal protein uL10 family.</text>
</comment>
<reference key="1">
    <citation type="submission" date="2009-01" db="EMBL/GenBank/DDBJ databases">
        <title>Complete sequence of chromosome of Arthrobacter chlorophenolicus A6.</title>
        <authorList>
            <consortium name="US DOE Joint Genome Institute"/>
            <person name="Lucas S."/>
            <person name="Copeland A."/>
            <person name="Lapidus A."/>
            <person name="Glavina del Rio T."/>
            <person name="Tice H."/>
            <person name="Bruce D."/>
            <person name="Goodwin L."/>
            <person name="Pitluck S."/>
            <person name="Goltsman E."/>
            <person name="Clum A."/>
            <person name="Larimer F."/>
            <person name="Land M."/>
            <person name="Hauser L."/>
            <person name="Kyrpides N."/>
            <person name="Mikhailova N."/>
            <person name="Jansson J."/>
            <person name="Richardson P."/>
        </authorList>
    </citation>
    <scope>NUCLEOTIDE SEQUENCE [LARGE SCALE GENOMIC DNA]</scope>
    <source>
        <strain>ATCC 700700 / DSM 12829 / CIP 107037 / JCM 12360 / KCTC 9906 / NCIMB 13794 / A6</strain>
    </source>
</reference>
<gene>
    <name evidence="1" type="primary">rplJ</name>
    <name type="ordered locus">Achl_2702</name>
</gene>
<sequence>MATPTKVSAVAEITNDFKESNAAVLTEYRGLTVAQLKQLRVSLGQDTKFAVVKNTLTAIAAKEAGVEAFDGQLAGPTAIAFIKGDAVAAAKSLTDFAKANKQLVIKTGYFEGKALDASEVAALAALESRELQLAKVAGVLKAPAAAAARIIDALRLKLEEENGAPAAAEAPAAEESADSAAEAAAEAPAEAPAAEEN</sequence>
<proteinExistence type="inferred from homology"/>
<organism>
    <name type="scientific">Pseudarthrobacter chlorophenolicus (strain ATCC 700700 / DSM 12829 / CIP 107037 / JCM 12360 / KCTC 9906 / NCIMB 13794 / A6)</name>
    <name type="common">Arthrobacter chlorophenolicus</name>
    <dbReference type="NCBI Taxonomy" id="452863"/>
    <lineage>
        <taxon>Bacteria</taxon>
        <taxon>Bacillati</taxon>
        <taxon>Actinomycetota</taxon>
        <taxon>Actinomycetes</taxon>
        <taxon>Micrococcales</taxon>
        <taxon>Micrococcaceae</taxon>
        <taxon>Pseudarthrobacter</taxon>
    </lineage>
</organism>
<evidence type="ECO:0000255" key="1">
    <source>
        <dbReference type="HAMAP-Rule" id="MF_00362"/>
    </source>
</evidence>
<evidence type="ECO:0000256" key="2">
    <source>
        <dbReference type="SAM" id="MobiDB-lite"/>
    </source>
</evidence>
<evidence type="ECO:0000305" key="3"/>
<protein>
    <recommendedName>
        <fullName evidence="1">Large ribosomal subunit protein uL10</fullName>
    </recommendedName>
    <alternativeName>
        <fullName evidence="3">50S ribosomal protein L10</fullName>
    </alternativeName>
</protein>
<dbReference type="EMBL" id="CP001341">
    <property type="protein sequence ID" value="ACL40667.1"/>
    <property type="molecule type" value="Genomic_DNA"/>
</dbReference>
<dbReference type="RefSeq" id="WP_015937864.1">
    <property type="nucleotide sequence ID" value="NC_011886.1"/>
</dbReference>
<dbReference type="SMR" id="B8HD21"/>
<dbReference type="STRING" id="452863.Achl_2702"/>
<dbReference type="KEGG" id="ach:Achl_2702"/>
<dbReference type="eggNOG" id="COG0244">
    <property type="taxonomic scope" value="Bacteria"/>
</dbReference>
<dbReference type="HOGENOM" id="CLU_092227_1_0_11"/>
<dbReference type="OrthoDB" id="3186107at2"/>
<dbReference type="Proteomes" id="UP000002505">
    <property type="component" value="Chromosome"/>
</dbReference>
<dbReference type="GO" id="GO:0015934">
    <property type="term" value="C:large ribosomal subunit"/>
    <property type="evidence" value="ECO:0007669"/>
    <property type="project" value="InterPro"/>
</dbReference>
<dbReference type="GO" id="GO:0070180">
    <property type="term" value="F:large ribosomal subunit rRNA binding"/>
    <property type="evidence" value="ECO:0007669"/>
    <property type="project" value="UniProtKB-UniRule"/>
</dbReference>
<dbReference type="GO" id="GO:0003735">
    <property type="term" value="F:structural constituent of ribosome"/>
    <property type="evidence" value="ECO:0007669"/>
    <property type="project" value="InterPro"/>
</dbReference>
<dbReference type="GO" id="GO:0006412">
    <property type="term" value="P:translation"/>
    <property type="evidence" value="ECO:0007669"/>
    <property type="project" value="UniProtKB-UniRule"/>
</dbReference>
<dbReference type="CDD" id="cd05797">
    <property type="entry name" value="Ribosomal_L10"/>
    <property type="match status" value="1"/>
</dbReference>
<dbReference type="Gene3D" id="3.30.70.1730">
    <property type="match status" value="1"/>
</dbReference>
<dbReference type="HAMAP" id="MF_00362">
    <property type="entry name" value="Ribosomal_uL10"/>
    <property type="match status" value="1"/>
</dbReference>
<dbReference type="InterPro" id="IPR001790">
    <property type="entry name" value="Ribosomal_uL10"/>
</dbReference>
<dbReference type="InterPro" id="IPR043141">
    <property type="entry name" value="Ribosomal_uL10-like_sf"/>
</dbReference>
<dbReference type="InterPro" id="IPR022973">
    <property type="entry name" value="Ribosomal_uL10_bac"/>
</dbReference>
<dbReference type="InterPro" id="IPR047865">
    <property type="entry name" value="Ribosomal_uL10_bac_type"/>
</dbReference>
<dbReference type="InterPro" id="IPR002363">
    <property type="entry name" value="Ribosomal_uL10_CS_bac"/>
</dbReference>
<dbReference type="NCBIfam" id="NF000955">
    <property type="entry name" value="PRK00099.1-1"/>
    <property type="match status" value="1"/>
</dbReference>
<dbReference type="PANTHER" id="PTHR11560">
    <property type="entry name" value="39S RIBOSOMAL PROTEIN L10, MITOCHONDRIAL"/>
    <property type="match status" value="1"/>
</dbReference>
<dbReference type="Pfam" id="PF00466">
    <property type="entry name" value="Ribosomal_L10"/>
    <property type="match status" value="1"/>
</dbReference>
<dbReference type="SUPFAM" id="SSF160369">
    <property type="entry name" value="Ribosomal protein L10-like"/>
    <property type="match status" value="1"/>
</dbReference>
<dbReference type="PROSITE" id="PS01109">
    <property type="entry name" value="RIBOSOMAL_L10"/>
    <property type="match status" value="1"/>
</dbReference>
<accession>B8HD21</accession>
<name>RL10_PSECP</name>
<keyword id="KW-0687">Ribonucleoprotein</keyword>
<keyword id="KW-0689">Ribosomal protein</keyword>
<keyword id="KW-0694">RNA-binding</keyword>
<keyword id="KW-0699">rRNA-binding</keyword>